<reference key="1">
    <citation type="journal article" date="1997" name="Nature">
        <title>The complete genome sequence of the hyperthermophilic, sulphate-reducing archaeon Archaeoglobus fulgidus.</title>
        <authorList>
            <person name="Klenk H.-P."/>
            <person name="Clayton R.A."/>
            <person name="Tomb J.-F."/>
            <person name="White O."/>
            <person name="Nelson K.E."/>
            <person name="Ketchum K.A."/>
            <person name="Dodson R.J."/>
            <person name="Gwinn M.L."/>
            <person name="Hickey E.K."/>
            <person name="Peterson J.D."/>
            <person name="Richardson D.L."/>
            <person name="Kerlavage A.R."/>
            <person name="Graham D.E."/>
            <person name="Kyrpides N.C."/>
            <person name="Fleischmann R.D."/>
            <person name="Quackenbush J."/>
            <person name="Lee N.H."/>
            <person name="Sutton G.G."/>
            <person name="Gill S.R."/>
            <person name="Kirkness E.F."/>
            <person name="Dougherty B.A."/>
            <person name="McKenney K."/>
            <person name="Adams M.D."/>
            <person name="Loftus B.J."/>
            <person name="Peterson S.N."/>
            <person name="Reich C.I."/>
            <person name="McNeil L.K."/>
            <person name="Badger J.H."/>
            <person name="Glodek A."/>
            <person name="Zhou L."/>
            <person name="Overbeek R."/>
            <person name="Gocayne J.D."/>
            <person name="Weidman J.F."/>
            <person name="McDonald L.A."/>
            <person name="Utterback T.R."/>
            <person name="Cotton M.D."/>
            <person name="Spriggs T."/>
            <person name="Artiach P."/>
            <person name="Kaine B.P."/>
            <person name="Sykes S.M."/>
            <person name="Sadow P.W."/>
            <person name="D'Andrea K.P."/>
            <person name="Bowman C."/>
            <person name="Fujii C."/>
            <person name="Garland S.A."/>
            <person name="Mason T.M."/>
            <person name="Olsen G.J."/>
            <person name="Fraser C.M."/>
            <person name="Smith H.O."/>
            <person name="Woese C.R."/>
            <person name="Venter J.C."/>
        </authorList>
    </citation>
    <scope>NUCLEOTIDE SEQUENCE [LARGE SCALE GENOMIC DNA]</scope>
    <source>
        <strain>ATCC 49558 / DSM 4304 / JCM 9628 / NBRC 100126 / VC-16</strain>
    </source>
</reference>
<feature type="chain" id="PRO_0000156358" description="Probable inosine/xanthosine triphosphatase">
    <location>
        <begin position="1"/>
        <end position="169"/>
    </location>
</feature>
<feature type="binding site" evidence="1">
    <location>
        <position position="58"/>
    </location>
    <ligand>
        <name>Mg(2+)</name>
        <dbReference type="ChEBI" id="CHEBI:18420"/>
    </ligand>
</feature>
<gene>
    <name type="ordered locus">AF_0901</name>
</gene>
<keyword id="KW-0378">Hydrolase</keyword>
<keyword id="KW-0460">Magnesium</keyword>
<keyword id="KW-0464">Manganese</keyword>
<keyword id="KW-0479">Metal-binding</keyword>
<keyword id="KW-0546">Nucleotide metabolism</keyword>
<keyword id="KW-0547">Nucleotide-binding</keyword>
<keyword id="KW-1185">Reference proteome</keyword>
<accession>O29361</accession>
<proteinExistence type="inferred from homology"/>
<name>NCPP_ARCFU</name>
<organism>
    <name type="scientific">Archaeoglobus fulgidus (strain ATCC 49558 / DSM 4304 / JCM 9628 / NBRC 100126 / VC-16)</name>
    <dbReference type="NCBI Taxonomy" id="224325"/>
    <lineage>
        <taxon>Archaea</taxon>
        <taxon>Methanobacteriati</taxon>
        <taxon>Methanobacteriota</taxon>
        <taxon>Archaeoglobi</taxon>
        <taxon>Archaeoglobales</taxon>
        <taxon>Archaeoglobaceae</taxon>
        <taxon>Archaeoglobus</taxon>
    </lineage>
</organism>
<protein>
    <recommendedName>
        <fullName evidence="1">Probable inosine/xanthosine triphosphatase</fullName>
        <shortName evidence="1">ITPase/XTPase</shortName>
        <ecNumber evidence="1">3.6.1.73</ecNumber>
    </recommendedName>
    <alternativeName>
        <fullName evidence="1">Non-canonical purine NTP phosphatase</fullName>
    </alternativeName>
    <alternativeName>
        <fullName evidence="1">Non-standard purine NTP phosphatase</fullName>
    </alternativeName>
    <alternativeName>
        <fullName evidence="1">Nucleoside-triphosphate phosphatase</fullName>
        <shortName evidence="1">NTPase</shortName>
    </alternativeName>
</protein>
<comment type="function">
    <text evidence="1">Phosphatase that hydrolyzes non-canonical purine nucleotides such as XTP and ITP to their respective diphosphate derivatives. Probably excludes non-canonical purines from DNA/RNA precursor pool, thus preventing their incorporation into DNA/RNA and avoiding chromosomal lesions.</text>
</comment>
<comment type="catalytic activity">
    <reaction evidence="1">
        <text>XTP + H2O = XDP + phosphate + H(+)</text>
        <dbReference type="Rhea" id="RHEA:28406"/>
        <dbReference type="ChEBI" id="CHEBI:15377"/>
        <dbReference type="ChEBI" id="CHEBI:15378"/>
        <dbReference type="ChEBI" id="CHEBI:43474"/>
        <dbReference type="ChEBI" id="CHEBI:59884"/>
        <dbReference type="ChEBI" id="CHEBI:61314"/>
        <dbReference type="EC" id="3.6.1.73"/>
    </reaction>
</comment>
<comment type="catalytic activity">
    <reaction evidence="1">
        <text>ITP + H2O = IDP + phosphate + H(+)</text>
        <dbReference type="Rhea" id="RHEA:28330"/>
        <dbReference type="ChEBI" id="CHEBI:15377"/>
        <dbReference type="ChEBI" id="CHEBI:15378"/>
        <dbReference type="ChEBI" id="CHEBI:43474"/>
        <dbReference type="ChEBI" id="CHEBI:58280"/>
        <dbReference type="ChEBI" id="CHEBI:61402"/>
        <dbReference type="EC" id="3.6.1.73"/>
    </reaction>
</comment>
<comment type="cofactor">
    <cofactor evidence="1">
        <name>Mg(2+)</name>
        <dbReference type="ChEBI" id="CHEBI:18420"/>
    </cofactor>
    <cofactor evidence="1">
        <name>Mn(2+)</name>
        <dbReference type="ChEBI" id="CHEBI:29035"/>
    </cofactor>
    <text evidence="1">Binds 1 divalent metal cation per subunit; can use either Mg(2+) or Mn(2+).</text>
</comment>
<comment type="subunit">
    <text evidence="1">Homodimer.</text>
</comment>
<comment type="similarity">
    <text evidence="1">Belongs to the YjjX NTPase family.</text>
</comment>
<evidence type="ECO:0000255" key="1">
    <source>
        <dbReference type="HAMAP-Rule" id="MF_00648"/>
    </source>
</evidence>
<sequence>MGSKNPTKIEGARRAFEQYFDDVEIVGVEVSTSAPPQPFDAETVRGAIERAKKAYSPDFDFSVGIEAGLFRSECTITGYLDFQVAAVYDGERCTIGFGPGFEYPKLVVEEVLKGKEVGEVMEKVSGIKNLGKKVGAVHYLSKGAISRTDLSRISVTMALIPFINREMYL</sequence>
<dbReference type="EC" id="3.6.1.73" evidence="1"/>
<dbReference type="EMBL" id="AE000782">
    <property type="protein sequence ID" value="AAB90341.1"/>
    <property type="molecule type" value="Genomic_DNA"/>
</dbReference>
<dbReference type="PIR" id="E69362">
    <property type="entry name" value="E69362"/>
</dbReference>
<dbReference type="SMR" id="O29361"/>
<dbReference type="STRING" id="224325.AF_0901"/>
<dbReference type="PaxDb" id="224325-AF_0901"/>
<dbReference type="EnsemblBacteria" id="AAB90341">
    <property type="protein sequence ID" value="AAB90341"/>
    <property type="gene ID" value="AF_0901"/>
</dbReference>
<dbReference type="KEGG" id="afu:AF_0901"/>
<dbReference type="eggNOG" id="arCOG01221">
    <property type="taxonomic scope" value="Archaea"/>
</dbReference>
<dbReference type="HOGENOM" id="CLU_087417_0_1_2"/>
<dbReference type="OrthoDB" id="52857at2157"/>
<dbReference type="PhylomeDB" id="O29361"/>
<dbReference type="Proteomes" id="UP000002199">
    <property type="component" value="Chromosome"/>
</dbReference>
<dbReference type="GO" id="GO:0103023">
    <property type="term" value="F:ITPase activity"/>
    <property type="evidence" value="ECO:0007669"/>
    <property type="project" value="UniProtKB-EC"/>
</dbReference>
<dbReference type="GO" id="GO:0046872">
    <property type="term" value="F:metal ion binding"/>
    <property type="evidence" value="ECO:0007669"/>
    <property type="project" value="UniProtKB-KW"/>
</dbReference>
<dbReference type="GO" id="GO:0000166">
    <property type="term" value="F:nucleotide binding"/>
    <property type="evidence" value="ECO:0007669"/>
    <property type="project" value="UniProtKB-KW"/>
</dbReference>
<dbReference type="GO" id="GO:0017111">
    <property type="term" value="F:ribonucleoside triphosphate phosphatase activity"/>
    <property type="evidence" value="ECO:0000250"/>
    <property type="project" value="UniProtKB"/>
</dbReference>
<dbReference type="GO" id="GO:0009117">
    <property type="term" value="P:nucleotide metabolic process"/>
    <property type="evidence" value="ECO:0007669"/>
    <property type="project" value="UniProtKB-KW"/>
</dbReference>
<dbReference type="GO" id="GO:0006772">
    <property type="term" value="P:thiamine metabolic process"/>
    <property type="evidence" value="ECO:0007669"/>
    <property type="project" value="TreeGrafter"/>
</dbReference>
<dbReference type="FunFam" id="3.90.950.10:FF:000002">
    <property type="entry name" value="Inosine/xanthosine triphosphatase"/>
    <property type="match status" value="1"/>
</dbReference>
<dbReference type="Gene3D" id="3.90.950.10">
    <property type="match status" value="1"/>
</dbReference>
<dbReference type="HAMAP" id="MF_00648">
    <property type="entry name" value="Non_canon_purine_NTPase_YjjX"/>
    <property type="match status" value="1"/>
</dbReference>
<dbReference type="InterPro" id="IPR029001">
    <property type="entry name" value="ITPase-like_fam"/>
</dbReference>
<dbReference type="InterPro" id="IPR002786">
    <property type="entry name" value="Non_canon_purine_NTPase"/>
</dbReference>
<dbReference type="InterPro" id="IPR026533">
    <property type="entry name" value="NTPase/PRRC1"/>
</dbReference>
<dbReference type="InterPro" id="IPR050299">
    <property type="entry name" value="YjjX_NTPase"/>
</dbReference>
<dbReference type="NCBIfam" id="TIGR00258">
    <property type="entry name" value="inosine/xanthosine triphosphatase"/>
    <property type="match status" value="1"/>
</dbReference>
<dbReference type="NCBIfam" id="NF003039">
    <property type="entry name" value="PRK03941.1"/>
    <property type="match status" value="1"/>
</dbReference>
<dbReference type="PANTHER" id="PTHR34699">
    <property type="match status" value="1"/>
</dbReference>
<dbReference type="PANTHER" id="PTHR34699:SF2">
    <property type="entry name" value="NON-CANONICAL PURINE NTP PHOSPHATASE_PRRC1 DOMAIN-CONTAINING PROTEIN"/>
    <property type="match status" value="1"/>
</dbReference>
<dbReference type="Pfam" id="PF01931">
    <property type="entry name" value="NTPase_I-T"/>
    <property type="match status" value="1"/>
</dbReference>
<dbReference type="SUPFAM" id="SSF52972">
    <property type="entry name" value="ITPase-like"/>
    <property type="match status" value="1"/>
</dbReference>